<sequence length="328" mass="37314">MSISYVARIINGNSEVGILDQVREPTLKIFVRTIAQIHVPLRTTTPRATQYRALSTQPNRACTQQTSSILATTPRALHTSCARDRDWQAPKPFKRRGGGRSVQNNPLASSHASEPVANDPFRHLSQNDYARPTARPQAYRSKTGDSGGREQRYKPAGGARKPRRPNPESNTQGGNWAEPKTKEPWRIQKEALAKKFPEGWKPRKKLSPDALVGIRMLHQQFPDEYTTETLAQKFEVSPEAIRRILKAKWVADPETEVERQARWHNRGKQVWTKWAALGKKPPRKWRAEGIVRDPIWNEPRGPNHKDKAARAEAQRREAQRRLASGMMG</sequence>
<name>RRG9_CHAGB</name>
<reference key="1">
    <citation type="journal article" date="2015" name="Genome Announc.">
        <title>Draft genome sequence of the cellulolytic fungus Chaetomium globosum.</title>
        <authorList>
            <person name="Cuomo C.A."/>
            <person name="Untereiner W.A."/>
            <person name="Ma L.-J."/>
            <person name="Grabherr M."/>
            <person name="Birren B.W."/>
        </authorList>
    </citation>
    <scope>NUCLEOTIDE SEQUENCE [LARGE SCALE GENOMIC DNA]</scope>
    <source>
        <strain>ATCC 6205 / CBS 148.51 / DSM 1962 / NBRC 6347 / NRRL 1970</strain>
    </source>
</reference>
<comment type="function">
    <text evidence="1">Required for respiratory activity and maintenance and expression of the mitochondrial genome.</text>
</comment>
<comment type="subcellular location">
    <subcellularLocation>
        <location evidence="1">Mitochondrion</location>
    </subcellularLocation>
</comment>
<comment type="similarity">
    <text evidence="4">Belongs to the RRG9 family.</text>
</comment>
<feature type="transit peptide" description="Mitochondrion" evidence="2">
    <location>
        <begin position="1"/>
        <end status="unknown"/>
    </location>
</feature>
<feature type="chain" id="PRO_0000407944" description="Required for respiratory growth protein 9, mitochondrial">
    <location>
        <begin status="unknown"/>
        <end position="328"/>
    </location>
</feature>
<feature type="region of interest" description="Disordered" evidence="3">
    <location>
        <begin position="81"/>
        <end position="184"/>
    </location>
</feature>
<feature type="region of interest" description="Disordered" evidence="3">
    <location>
        <begin position="288"/>
        <end position="328"/>
    </location>
</feature>
<feature type="compositionally biased region" description="Polar residues" evidence="3">
    <location>
        <begin position="101"/>
        <end position="112"/>
    </location>
</feature>
<feature type="compositionally biased region" description="Basic and acidic residues" evidence="3">
    <location>
        <begin position="301"/>
        <end position="320"/>
    </location>
</feature>
<proteinExistence type="inferred from homology"/>
<dbReference type="EMBL" id="CH408035">
    <property type="protein sequence ID" value="EAQ84017.1"/>
    <property type="molecule type" value="Genomic_DNA"/>
</dbReference>
<dbReference type="RefSeq" id="XP_001228348.1">
    <property type="nucleotide sequence ID" value="XM_001228347.1"/>
</dbReference>
<dbReference type="SMR" id="Q2GNN3"/>
<dbReference type="STRING" id="306901.Q2GNN3"/>
<dbReference type="GeneID" id="4396463"/>
<dbReference type="VEuPathDB" id="FungiDB:CHGG_10421"/>
<dbReference type="eggNOG" id="ENOG502S7IA">
    <property type="taxonomic scope" value="Eukaryota"/>
</dbReference>
<dbReference type="HOGENOM" id="CLU_047598_0_0_1"/>
<dbReference type="InParanoid" id="Q2GNN3"/>
<dbReference type="OMA" id="MSCSCNT"/>
<dbReference type="OrthoDB" id="5578174at2759"/>
<dbReference type="Proteomes" id="UP000001056">
    <property type="component" value="Unassembled WGS sequence"/>
</dbReference>
<dbReference type="GO" id="GO:0005739">
    <property type="term" value="C:mitochondrion"/>
    <property type="evidence" value="ECO:0007669"/>
    <property type="project" value="UniProtKB-SubCell"/>
</dbReference>
<dbReference type="GO" id="GO:0005634">
    <property type="term" value="C:nucleus"/>
    <property type="evidence" value="ECO:0007669"/>
    <property type="project" value="TreeGrafter"/>
</dbReference>
<dbReference type="InterPro" id="IPR010487">
    <property type="entry name" value="NGRN/Rrg9"/>
</dbReference>
<dbReference type="PANTHER" id="PTHR13475">
    <property type="entry name" value="NEUGRIN"/>
    <property type="match status" value="1"/>
</dbReference>
<dbReference type="PANTHER" id="PTHR13475:SF3">
    <property type="entry name" value="NEUGRIN"/>
    <property type="match status" value="1"/>
</dbReference>
<dbReference type="Pfam" id="PF06413">
    <property type="entry name" value="Neugrin"/>
    <property type="match status" value="1"/>
</dbReference>
<keyword id="KW-0496">Mitochondrion</keyword>
<keyword id="KW-1185">Reference proteome</keyword>
<keyword id="KW-0809">Transit peptide</keyword>
<protein>
    <recommendedName>
        <fullName>Required for respiratory growth protein 9, mitochondrial</fullName>
    </recommendedName>
</protein>
<accession>Q2GNN3</accession>
<gene>
    <name type="primary">RRG9</name>
    <name type="ORF">CHGG_10421</name>
</gene>
<organism>
    <name type="scientific">Chaetomium globosum (strain ATCC 6205 / CBS 148.51 / DSM 1962 / NBRC 6347 / NRRL 1970)</name>
    <name type="common">Soil fungus</name>
    <dbReference type="NCBI Taxonomy" id="306901"/>
    <lineage>
        <taxon>Eukaryota</taxon>
        <taxon>Fungi</taxon>
        <taxon>Dikarya</taxon>
        <taxon>Ascomycota</taxon>
        <taxon>Pezizomycotina</taxon>
        <taxon>Sordariomycetes</taxon>
        <taxon>Sordariomycetidae</taxon>
        <taxon>Sordariales</taxon>
        <taxon>Chaetomiaceae</taxon>
        <taxon>Chaetomium</taxon>
    </lineage>
</organism>
<evidence type="ECO:0000250" key="1"/>
<evidence type="ECO:0000255" key="2"/>
<evidence type="ECO:0000256" key="3">
    <source>
        <dbReference type="SAM" id="MobiDB-lite"/>
    </source>
</evidence>
<evidence type="ECO:0000305" key="4"/>